<organism>
    <name type="scientific">Pectobacterium carotovorum subsp. carotovorum (strain PC1)</name>
    <dbReference type="NCBI Taxonomy" id="561230"/>
    <lineage>
        <taxon>Bacteria</taxon>
        <taxon>Pseudomonadati</taxon>
        <taxon>Pseudomonadota</taxon>
        <taxon>Gammaproteobacteria</taxon>
        <taxon>Enterobacterales</taxon>
        <taxon>Pectobacteriaceae</taxon>
        <taxon>Pectobacterium</taxon>
    </lineage>
</organism>
<accession>C6DB34</accession>
<sequence>MKPAARRRARECAVQALYSWQLSKNDIADVEHQFLSEQDVKDVDITYFRELLAGVATQAEKLDQLMAPFLSRQIEELGQVEKAILRLAMFELSKREDVPYKVAINEAIELAKVFGAEDSHKFVNGVLDKAAPSVRKGKK</sequence>
<proteinExistence type="inferred from homology"/>
<reference key="1">
    <citation type="submission" date="2009-07" db="EMBL/GenBank/DDBJ databases">
        <title>Complete sequence of Pectobacterium carotovorum subsp. carotovorum PC1.</title>
        <authorList>
            <consortium name="US DOE Joint Genome Institute"/>
            <person name="Lucas S."/>
            <person name="Copeland A."/>
            <person name="Lapidus A."/>
            <person name="Glavina del Rio T."/>
            <person name="Tice H."/>
            <person name="Bruce D."/>
            <person name="Goodwin L."/>
            <person name="Pitluck S."/>
            <person name="Munk A.C."/>
            <person name="Brettin T."/>
            <person name="Detter J.C."/>
            <person name="Han C."/>
            <person name="Tapia R."/>
            <person name="Larimer F."/>
            <person name="Land M."/>
            <person name="Hauser L."/>
            <person name="Kyrpides N."/>
            <person name="Mikhailova N."/>
            <person name="Balakrishnan V."/>
            <person name="Glasner J."/>
            <person name="Perna N.T."/>
        </authorList>
    </citation>
    <scope>NUCLEOTIDE SEQUENCE [LARGE SCALE GENOMIC DNA]</scope>
    <source>
        <strain>PC1</strain>
    </source>
</reference>
<evidence type="ECO:0000255" key="1">
    <source>
        <dbReference type="HAMAP-Rule" id="MF_00073"/>
    </source>
</evidence>
<comment type="function">
    <text evidence="1">Involved in transcription antitermination. Required for transcription of ribosomal RNA (rRNA) genes. Binds specifically to the boxA antiterminator sequence of the ribosomal RNA (rrn) operons.</text>
</comment>
<comment type="similarity">
    <text evidence="1">Belongs to the NusB family.</text>
</comment>
<gene>
    <name evidence="1" type="primary">nusB</name>
    <name type="ordered locus">PC1_1027</name>
</gene>
<feature type="chain" id="PRO_1000202486" description="Transcription antitermination protein NusB">
    <location>
        <begin position="1"/>
        <end position="139"/>
    </location>
</feature>
<protein>
    <recommendedName>
        <fullName evidence="1">Transcription antitermination protein NusB</fullName>
    </recommendedName>
    <alternativeName>
        <fullName evidence="1">Antitermination factor NusB</fullName>
    </alternativeName>
</protein>
<dbReference type="EMBL" id="CP001657">
    <property type="protein sequence ID" value="ACT12076.1"/>
    <property type="molecule type" value="Genomic_DNA"/>
</dbReference>
<dbReference type="RefSeq" id="WP_012773709.1">
    <property type="nucleotide sequence ID" value="NC_012917.1"/>
</dbReference>
<dbReference type="SMR" id="C6DB34"/>
<dbReference type="STRING" id="561230.PC1_1027"/>
<dbReference type="GeneID" id="67795197"/>
<dbReference type="KEGG" id="pct:PC1_1027"/>
<dbReference type="eggNOG" id="COG0781">
    <property type="taxonomic scope" value="Bacteria"/>
</dbReference>
<dbReference type="HOGENOM" id="CLU_087843_4_1_6"/>
<dbReference type="OrthoDB" id="9789556at2"/>
<dbReference type="Proteomes" id="UP000002736">
    <property type="component" value="Chromosome"/>
</dbReference>
<dbReference type="GO" id="GO:0005829">
    <property type="term" value="C:cytosol"/>
    <property type="evidence" value="ECO:0007669"/>
    <property type="project" value="TreeGrafter"/>
</dbReference>
<dbReference type="GO" id="GO:0003723">
    <property type="term" value="F:RNA binding"/>
    <property type="evidence" value="ECO:0007669"/>
    <property type="project" value="UniProtKB-UniRule"/>
</dbReference>
<dbReference type="GO" id="GO:0006353">
    <property type="term" value="P:DNA-templated transcription termination"/>
    <property type="evidence" value="ECO:0007669"/>
    <property type="project" value="UniProtKB-UniRule"/>
</dbReference>
<dbReference type="GO" id="GO:0031564">
    <property type="term" value="P:transcription antitermination"/>
    <property type="evidence" value="ECO:0007669"/>
    <property type="project" value="UniProtKB-KW"/>
</dbReference>
<dbReference type="CDD" id="cd00619">
    <property type="entry name" value="Terminator_NusB"/>
    <property type="match status" value="1"/>
</dbReference>
<dbReference type="FunFam" id="1.10.940.10:FF:000001">
    <property type="entry name" value="Transcription antitermination factor NusB"/>
    <property type="match status" value="1"/>
</dbReference>
<dbReference type="Gene3D" id="1.10.940.10">
    <property type="entry name" value="NusB-like"/>
    <property type="match status" value="1"/>
</dbReference>
<dbReference type="HAMAP" id="MF_00073">
    <property type="entry name" value="NusB"/>
    <property type="match status" value="1"/>
</dbReference>
<dbReference type="InterPro" id="IPR035926">
    <property type="entry name" value="NusB-like_sf"/>
</dbReference>
<dbReference type="InterPro" id="IPR011605">
    <property type="entry name" value="NusB_fam"/>
</dbReference>
<dbReference type="InterPro" id="IPR006027">
    <property type="entry name" value="NusB_RsmB_TIM44"/>
</dbReference>
<dbReference type="NCBIfam" id="TIGR01951">
    <property type="entry name" value="nusB"/>
    <property type="match status" value="1"/>
</dbReference>
<dbReference type="PANTHER" id="PTHR11078:SF3">
    <property type="entry name" value="ANTITERMINATION NUSB DOMAIN-CONTAINING PROTEIN"/>
    <property type="match status" value="1"/>
</dbReference>
<dbReference type="PANTHER" id="PTHR11078">
    <property type="entry name" value="N UTILIZATION SUBSTANCE PROTEIN B-RELATED"/>
    <property type="match status" value="1"/>
</dbReference>
<dbReference type="Pfam" id="PF01029">
    <property type="entry name" value="NusB"/>
    <property type="match status" value="1"/>
</dbReference>
<dbReference type="SUPFAM" id="SSF48013">
    <property type="entry name" value="NusB-like"/>
    <property type="match status" value="1"/>
</dbReference>
<keyword id="KW-0694">RNA-binding</keyword>
<keyword id="KW-0804">Transcription</keyword>
<keyword id="KW-0889">Transcription antitermination</keyword>
<keyword id="KW-0805">Transcription regulation</keyword>
<name>NUSB_PECCP</name>